<keyword id="KW-0238">DNA-binding</keyword>
<keyword id="KW-0536">Nodulation</keyword>
<keyword id="KW-0678">Repressor</keyword>
<keyword id="KW-0804">Transcription</keyword>
<keyword id="KW-0805">Transcription regulation</keyword>
<proteinExistence type="predicted"/>
<dbReference type="EMBL" id="X59050">
    <property type="protein sequence ID" value="CAA41777.1"/>
    <property type="molecule type" value="Genomic_DNA"/>
</dbReference>
<dbReference type="PIR" id="S19675">
    <property type="entry name" value="S19675"/>
</dbReference>
<dbReference type="SMR" id="P28267"/>
<dbReference type="STRING" id="382.DU99_13395"/>
<dbReference type="GO" id="GO:0003677">
    <property type="term" value="F:DNA binding"/>
    <property type="evidence" value="ECO:0007669"/>
    <property type="project" value="UniProtKB-KW"/>
</dbReference>
<dbReference type="GO" id="GO:0003700">
    <property type="term" value="F:DNA-binding transcription factor activity"/>
    <property type="evidence" value="ECO:0007669"/>
    <property type="project" value="InterPro"/>
</dbReference>
<dbReference type="CDD" id="cd00090">
    <property type="entry name" value="HTH_ARSR"/>
    <property type="match status" value="1"/>
</dbReference>
<dbReference type="Gene3D" id="1.10.10.10">
    <property type="entry name" value="Winged helix-like DNA-binding domain superfamily/Winged helix DNA-binding domain"/>
    <property type="match status" value="1"/>
</dbReference>
<dbReference type="InterPro" id="IPR011991">
    <property type="entry name" value="ArsR-like_HTH"/>
</dbReference>
<dbReference type="InterPro" id="IPR001845">
    <property type="entry name" value="HTH_ArsR_DNA-bd_dom"/>
</dbReference>
<dbReference type="InterPro" id="IPR051011">
    <property type="entry name" value="Metal_resp_trans_reg"/>
</dbReference>
<dbReference type="InterPro" id="IPR036388">
    <property type="entry name" value="WH-like_DNA-bd_sf"/>
</dbReference>
<dbReference type="InterPro" id="IPR036390">
    <property type="entry name" value="WH_DNA-bd_sf"/>
</dbReference>
<dbReference type="NCBIfam" id="NF033788">
    <property type="entry name" value="HTH_metalloreg"/>
    <property type="match status" value="1"/>
</dbReference>
<dbReference type="PANTHER" id="PTHR43132">
    <property type="entry name" value="ARSENICAL RESISTANCE OPERON REPRESSOR ARSR-RELATED"/>
    <property type="match status" value="1"/>
</dbReference>
<dbReference type="PANTHER" id="PTHR43132:SF2">
    <property type="entry name" value="ARSENICAL RESISTANCE OPERON REPRESSOR ARSR-RELATED"/>
    <property type="match status" value="1"/>
</dbReference>
<dbReference type="Pfam" id="PF01022">
    <property type="entry name" value="HTH_5"/>
    <property type="match status" value="1"/>
</dbReference>
<dbReference type="PRINTS" id="PR00778">
    <property type="entry name" value="HTHARSR"/>
</dbReference>
<dbReference type="SMART" id="SM00418">
    <property type="entry name" value="HTH_ARSR"/>
    <property type="match status" value="1"/>
</dbReference>
<dbReference type="SUPFAM" id="SSF46785">
    <property type="entry name" value="Winged helix' DNA-binding domain"/>
    <property type="match status" value="1"/>
</dbReference>
<dbReference type="PROSITE" id="PS50987">
    <property type="entry name" value="HTH_ARSR_2"/>
    <property type="match status" value="1"/>
</dbReference>
<organism>
    <name type="scientific">Rhizobium meliloti</name>
    <name type="common">Ensifer meliloti</name>
    <name type="synonym">Sinorhizobium meliloti</name>
    <dbReference type="NCBI Taxonomy" id="382"/>
    <lineage>
        <taxon>Bacteria</taxon>
        <taxon>Pseudomonadati</taxon>
        <taxon>Pseudomonadota</taxon>
        <taxon>Alphaproteobacteria</taxon>
        <taxon>Hyphomicrobiales</taxon>
        <taxon>Rhizobiaceae</taxon>
        <taxon>Sinorhizobium/Ensifer group</taxon>
        <taxon>Sinorhizobium</taxon>
    </lineage>
</organism>
<sequence>MNFRMEHTMQPLPPEKHEDAEIAAGFLSAMANPKRLLILDSLVKEEMAVGALAHKVGLSQSALSQHLSKLRAQNLVSTRRDAQTIYYSSSSDAVLKILGALSDIYGDDTDAVEEKPLVRKSA</sequence>
<name>NOLR_RHIML</name>
<protein>
    <recommendedName>
        <fullName>Nodulation protein NolR</fullName>
    </recommendedName>
</protein>
<reference key="1">
    <citation type="journal article" date="1991" name="J. Mol. Biol.">
        <title>Identification of NolR, a negative transacting factor controlling the nod regulon in Rhizobium meliloti.</title>
        <authorList>
            <person name="Kondorosi E."/>
            <person name="Pierre M."/>
            <person name="Cren M."/>
            <person name="Haumann U."/>
            <person name="Buire M."/>
            <person name="Hoffmann B."/>
            <person name="Schell J."/>
            <person name="Kondorosi A."/>
        </authorList>
    </citation>
    <scope>NUCLEOTIDE SEQUENCE [GENOMIC DNA]</scope>
    <source>
        <strain>41</strain>
    </source>
</reference>
<comment type="function">
    <text>Negative transacting factor controlling the nod regulon. May control the expression of nodD1, nodD2, nodD3 and nodABC genes.</text>
</comment>
<comment type="subunit">
    <text>Binds to the operator site in homodimeric form.</text>
</comment>
<comment type="miscellaneous">
    <text>R.meliloti strain 1021 has a frameshift mutation in the nolR gene that disrupt the protein coding region.</text>
</comment>
<gene>
    <name type="primary">nolR</name>
</gene>
<accession>P28267</accession>
<evidence type="ECO:0000255" key="1">
    <source>
        <dbReference type="PROSITE-ProRule" id="PRU00340"/>
    </source>
</evidence>
<feature type="chain" id="PRO_0000160624" description="Nodulation protein NolR">
    <location>
        <begin position="1"/>
        <end position="122"/>
    </location>
</feature>
<feature type="domain" description="HTH arsR-type" evidence="1">
    <location>
        <begin position="15"/>
        <end position="109"/>
    </location>
</feature>
<feature type="DNA-binding region" description="H-T-H motif" evidence="1">
    <location>
        <begin position="49"/>
        <end position="68"/>
    </location>
</feature>